<reference key="1">
    <citation type="journal article" date="2004" name="Nature">
        <title>Genome evolution in yeasts.</title>
        <authorList>
            <person name="Dujon B."/>
            <person name="Sherman D."/>
            <person name="Fischer G."/>
            <person name="Durrens P."/>
            <person name="Casaregola S."/>
            <person name="Lafontaine I."/>
            <person name="de Montigny J."/>
            <person name="Marck C."/>
            <person name="Neuveglise C."/>
            <person name="Talla E."/>
            <person name="Goffard N."/>
            <person name="Frangeul L."/>
            <person name="Aigle M."/>
            <person name="Anthouard V."/>
            <person name="Babour A."/>
            <person name="Barbe V."/>
            <person name="Barnay S."/>
            <person name="Blanchin S."/>
            <person name="Beckerich J.-M."/>
            <person name="Beyne E."/>
            <person name="Bleykasten C."/>
            <person name="Boisrame A."/>
            <person name="Boyer J."/>
            <person name="Cattolico L."/>
            <person name="Confanioleri F."/>
            <person name="de Daruvar A."/>
            <person name="Despons L."/>
            <person name="Fabre E."/>
            <person name="Fairhead C."/>
            <person name="Ferry-Dumazet H."/>
            <person name="Groppi A."/>
            <person name="Hantraye F."/>
            <person name="Hennequin C."/>
            <person name="Jauniaux N."/>
            <person name="Joyet P."/>
            <person name="Kachouri R."/>
            <person name="Kerrest A."/>
            <person name="Koszul R."/>
            <person name="Lemaire M."/>
            <person name="Lesur I."/>
            <person name="Ma L."/>
            <person name="Muller H."/>
            <person name="Nicaud J.-M."/>
            <person name="Nikolski M."/>
            <person name="Oztas S."/>
            <person name="Ozier-Kalogeropoulos O."/>
            <person name="Pellenz S."/>
            <person name="Potier S."/>
            <person name="Richard G.-F."/>
            <person name="Straub M.-L."/>
            <person name="Suleau A."/>
            <person name="Swennen D."/>
            <person name="Tekaia F."/>
            <person name="Wesolowski-Louvel M."/>
            <person name="Westhof E."/>
            <person name="Wirth B."/>
            <person name="Zeniou-Meyer M."/>
            <person name="Zivanovic Y."/>
            <person name="Bolotin-Fukuhara M."/>
            <person name="Thierry A."/>
            <person name="Bouchier C."/>
            <person name="Caudron B."/>
            <person name="Scarpelli C."/>
            <person name="Gaillardin C."/>
            <person name="Weissenbach J."/>
            <person name="Wincker P."/>
            <person name="Souciet J.-L."/>
        </authorList>
    </citation>
    <scope>NUCLEOTIDE SEQUENCE [LARGE SCALE GENOMIC DNA]</scope>
    <source>
        <strain>CLIB 122 / E 150</strain>
    </source>
</reference>
<organism>
    <name type="scientific">Yarrowia lipolytica (strain CLIB 122 / E 150)</name>
    <name type="common">Yeast</name>
    <name type="synonym">Candida lipolytica</name>
    <dbReference type="NCBI Taxonomy" id="284591"/>
    <lineage>
        <taxon>Eukaryota</taxon>
        <taxon>Fungi</taxon>
        <taxon>Dikarya</taxon>
        <taxon>Ascomycota</taxon>
        <taxon>Saccharomycotina</taxon>
        <taxon>Dipodascomycetes</taxon>
        <taxon>Dipodascales</taxon>
        <taxon>Dipodascales incertae sedis</taxon>
        <taxon>Yarrowia</taxon>
    </lineage>
</organism>
<comment type="function">
    <text evidence="1">Catalyzes the NADPH-dependent reduction of trans-2-enoyl thioesters in mitochondrial fatty acid synthesis (fatty acid synthesis type II). Fatty acid chain elongation in mitochondria uses acyl carrier protein (ACP) as an acyl group carrier, but the enzyme accepts both ACP and CoA thioesters as substrates in vitro. Required for respiration and the maintenance of the mitochondrial compartment.</text>
</comment>
<comment type="catalytic activity">
    <reaction evidence="1">
        <text>a 2,3-saturated acyl-[ACP] + NADP(+) = a (2E)-enoyl-[ACP] + NADPH + H(+)</text>
        <dbReference type="Rhea" id="RHEA:22564"/>
        <dbReference type="Rhea" id="RHEA-COMP:9925"/>
        <dbReference type="Rhea" id="RHEA-COMP:9926"/>
        <dbReference type="ChEBI" id="CHEBI:15378"/>
        <dbReference type="ChEBI" id="CHEBI:57783"/>
        <dbReference type="ChEBI" id="CHEBI:58349"/>
        <dbReference type="ChEBI" id="CHEBI:78784"/>
        <dbReference type="ChEBI" id="CHEBI:78785"/>
        <dbReference type="EC" id="1.3.1.104"/>
    </reaction>
</comment>
<comment type="subunit">
    <text evidence="2">Homodimer.</text>
</comment>
<comment type="subcellular location">
    <subcellularLocation>
        <location evidence="1">Mitochondrion matrix</location>
    </subcellularLocation>
</comment>
<comment type="similarity">
    <text evidence="4">Belongs to the zinc-containing alcohol dehydrogenase family. Quinone oxidoreductase subfamily.</text>
</comment>
<keyword id="KW-0275">Fatty acid biosynthesis</keyword>
<keyword id="KW-0276">Fatty acid metabolism</keyword>
<keyword id="KW-0444">Lipid biosynthesis</keyword>
<keyword id="KW-0443">Lipid metabolism</keyword>
<keyword id="KW-0496">Mitochondrion</keyword>
<keyword id="KW-0521">NADP</keyword>
<keyword id="KW-0560">Oxidoreductase</keyword>
<keyword id="KW-1185">Reference proteome</keyword>
<keyword id="KW-0809">Transit peptide</keyword>
<protein>
    <recommendedName>
        <fullName>Enoyl-[acyl-carrier-protein] reductase, mitochondrial</fullName>
        <ecNumber>1.3.1.104</ecNumber>
    </recommendedName>
    <alternativeName>
        <fullName>2-enoyl thioester reductase</fullName>
    </alternativeName>
</protein>
<dbReference type="EC" id="1.3.1.104"/>
<dbReference type="EMBL" id="CR382129">
    <property type="protein sequence ID" value="CAG82338.1"/>
    <property type="molecule type" value="Genomic_DNA"/>
</dbReference>
<dbReference type="RefSeq" id="XP_502018.1">
    <property type="nucleotide sequence ID" value="XM_502018.1"/>
</dbReference>
<dbReference type="SMR" id="Q6CBE4"/>
<dbReference type="FunCoup" id="Q6CBE4">
    <property type="interactions" value="709"/>
</dbReference>
<dbReference type="STRING" id="284591.Q6CBE4"/>
<dbReference type="EnsemblFungi" id="CAG82338">
    <property type="protein sequence ID" value="CAG82338"/>
    <property type="gene ID" value="YALI0_C19624g"/>
</dbReference>
<dbReference type="KEGG" id="yli:2909944"/>
<dbReference type="VEuPathDB" id="FungiDB:YALI0_C19624g"/>
<dbReference type="HOGENOM" id="CLU_026673_17_0_1"/>
<dbReference type="InParanoid" id="Q6CBE4"/>
<dbReference type="OMA" id="YGYTQSK"/>
<dbReference type="OrthoDB" id="61835at4891"/>
<dbReference type="Proteomes" id="UP000001300">
    <property type="component" value="Chromosome C"/>
</dbReference>
<dbReference type="GO" id="GO:0005759">
    <property type="term" value="C:mitochondrial matrix"/>
    <property type="evidence" value="ECO:0007669"/>
    <property type="project" value="UniProtKB-SubCell"/>
</dbReference>
<dbReference type="GO" id="GO:0005739">
    <property type="term" value="C:mitochondrion"/>
    <property type="evidence" value="ECO:0000318"/>
    <property type="project" value="GO_Central"/>
</dbReference>
<dbReference type="GO" id="GO:0141148">
    <property type="term" value="F:enoyl-[acyl-carrier-protein] reductase (NADPH) activity"/>
    <property type="evidence" value="ECO:0007669"/>
    <property type="project" value="UniProtKB-EC"/>
</dbReference>
<dbReference type="GO" id="GO:0006633">
    <property type="term" value="P:fatty acid biosynthetic process"/>
    <property type="evidence" value="ECO:0007669"/>
    <property type="project" value="UniProtKB-KW"/>
</dbReference>
<dbReference type="GO" id="GO:0006631">
    <property type="term" value="P:fatty acid metabolic process"/>
    <property type="evidence" value="ECO:0000318"/>
    <property type="project" value="GO_Central"/>
</dbReference>
<dbReference type="CDD" id="cd08290">
    <property type="entry name" value="ETR"/>
    <property type="match status" value="1"/>
</dbReference>
<dbReference type="FunFam" id="3.40.50.720:FF:000112">
    <property type="entry name" value="Enoyl-[acyl-carrier-protein] reductase 1, mitochondrial"/>
    <property type="match status" value="1"/>
</dbReference>
<dbReference type="Gene3D" id="3.90.180.10">
    <property type="entry name" value="Medium-chain alcohol dehydrogenases, catalytic domain"/>
    <property type="match status" value="1"/>
</dbReference>
<dbReference type="Gene3D" id="3.40.50.720">
    <property type="entry name" value="NAD(P)-binding Rossmann-like Domain"/>
    <property type="match status" value="1"/>
</dbReference>
<dbReference type="InterPro" id="IPR013149">
    <property type="entry name" value="ADH-like_C"/>
</dbReference>
<dbReference type="InterPro" id="IPR011032">
    <property type="entry name" value="GroES-like_sf"/>
</dbReference>
<dbReference type="InterPro" id="IPR051034">
    <property type="entry name" value="Mito_Enoyl-ACP_Reductase"/>
</dbReference>
<dbReference type="InterPro" id="IPR036291">
    <property type="entry name" value="NAD(P)-bd_dom_sf"/>
</dbReference>
<dbReference type="InterPro" id="IPR020843">
    <property type="entry name" value="PKS_ER"/>
</dbReference>
<dbReference type="PANTHER" id="PTHR43981">
    <property type="entry name" value="ENOYL-[ACYL-CARRIER-PROTEIN] REDUCTASE, MITOCHONDRIAL"/>
    <property type="match status" value="1"/>
</dbReference>
<dbReference type="PANTHER" id="PTHR43981:SF2">
    <property type="entry name" value="ENOYL-[ACYL-CARRIER-PROTEIN] REDUCTASE, MITOCHONDRIAL"/>
    <property type="match status" value="1"/>
</dbReference>
<dbReference type="Pfam" id="PF00107">
    <property type="entry name" value="ADH_zinc_N"/>
    <property type="match status" value="1"/>
</dbReference>
<dbReference type="SMART" id="SM00829">
    <property type="entry name" value="PKS_ER"/>
    <property type="match status" value="1"/>
</dbReference>
<dbReference type="SUPFAM" id="SSF50129">
    <property type="entry name" value="GroES-like"/>
    <property type="match status" value="1"/>
</dbReference>
<dbReference type="SUPFAM" id="SSF51735">
    <property type="entry name" value="NAD(P)-binding Rossmann-fold domains"/>
    <property type="match status" value="1"/>
</dbReference>
<proteinExistence type="inferred from homology"/>
<feature type="transit peptide" description="Mitochondrion" evidence="3">
    <location>
        <begin position="1"/>
        <end position="12"/>
    </location>
</feature>
<feature type="chain" id="PRO_0000000904" description="Enoyl-[acyl-carrier-protein] reductase, mitochondrial">
    <location>
        <begin position="13"/>
        <end position="376"/>
    </location>
</feature>
<feature type="active site" description="Proton donor" evidence="2">
    <location>
        <position position="79"/>
    </location>
</feature>
<feature type="binding site" evidence="2">
    <location>
        <position position="160"/>
    </location>
    <ligand>
        <name>NADP(+)</name>
        <dbReference type="ChEBI" id="CHEBI:58349"/>
    </ligand>
</feature>
<feature type="binding site" evidence="2">
    <location>
        <begin position="183"/>
        <end position="186"/>
    </location>
    <ligand>
        <name>NADP(+)</name>
        <dbReference type="ChEBI" id="CHEBI:58349"/>
    </ligand>
</feature>
<feature type="binding site" evidence="2">
    <location>
        <begin position="206"/>
        <end position="208"/>
    </location>
    <ligand>
        <name>NADP(+)</name>
        <dbReference type="ChEBI" id="CHEBI:58349"/>
    </ligand>
</feature>
<feature type="binding site" evidence="2">
    <location>
        <begin position="277"/>
        <end position="280"/>
    </location>
    <ligand>
        <name>NADP(+)</name>
        <dbReference type="ChEBI" id="CHEBI:58349"/>
    </ligand>
</feature>
<feature type="binding site" evidence="2">
    <location>
        <begin position="302"/>
        <end position="304"/>
    </location>
    <ligand>
        <name>NADP(+)</name>
        <dbReference type="ChEBI" id="CHEBI:58349"/>
    </ligand>
</feature>
<feature type="binding site" evidence="2">
    <location>
        <position position="368"/>
    </location>
    <ligand>
        <name>NADP(+)</name>
        <dbReference type="ChEBI" id="CHEBI:58349"/>
    </ligand>
</feature>
<accession>Q6CBE4</accession>
<gene>
    <name type="primary">ETR1</name>
    <name type="ordered locus">YALI0C19624g</name>
</gene>
<name>ETR1_YARLI</name>
<sequence>MLRTLRTSQLARSGFGTPSFGLRFNSVGRAFVFSQTGEPKDVIQVLEYPIEKPLENQVLLKSLGFTINPADINQLEGVYPSVPPKSVQINNEDAAIGGNEGLFQVLDPGAKSGLKKGDWVLPRKTCFGTWRSHALVEADTVVKIDNTDLTKVQATTVSVNPSTAYEMLKDLKEGDWFIQNGGNSGVGRAAIQIGHIRGLKSISVVRDRPDLEVLKKELTDLGATHVITEEEASDKLFSKQIKSWTGGKIKLALNCIGGKSATSIMRQLGAGGSIVTYGGMSKKPLTFPTGPFIFKDITAKGYWLTRWADKHPEEKAKTIENIFKFYREKKFVAPPVNISTLDFSKGNDVVLSEFLDALGKAQKGGGKKQLVQWVEY</sequence>
<evidence type="ECO:0000250" key="1">
    <source>
        <dbReference type="UniProtKB" id="P38071"/>
    </source>
</evidence>
<evidence type="ECO:0000250" key="2">
    <source>
        <dbReference type="UniProtKB" id="Q8WZM3"/>
    </source>
</evidence>
<evidence type="ECO:0000255" key="3"/>
<evidence type="ECO:0000305" key="4"/>